<protein>
    <recommendedName>
        <fullName>COP9 signalosome complex subunit 5</fullName>
        <ecNumber>3.4.-.-</ecNumber>
    </recommendedName>
</protein>
<keyword id="KW-0963">Cytoplasm</keyword>
<keyword id="KW-0378">Hydrolase</keyword>
<keyword id="KW-0479">Metal-binding</keyword>
<keyword id="KW-0482">Metalloprotease</keyword>
<keyword id="KW-0539">Nucleus</keyword>
<keyword id="KW-0645">Protease</keyword>
<keyword id="KW-1185">Reference proteome</keyword>
<keyword id="KW-0736">Signalosome</keyword>
<keyword id="KW-0862">Zinc</keyword>
<organism>
    <name type="scientific">Kluyveromyces lactis (strain ATCC 8585 / CBS 2359 / DSM 70799 / NBRC 1267 / NRRL Y-1140 / WM37)</name>
    <name type="common">Yeast</name>
    <name type="synonym">Candida sphaerica</name>
    <dbReference type="NCBI Taxonomy" id="284590"/>
    <lineage>
        <taxon>Eukaryota</taxon>
        <taxon>Fungi</taxon>
        <taxon>Dikarya</taxon>
        <taxon>Ascomycota</taxon>
        <taxon>Saccharomycotina</taxon>
        <taxon>Saccharomycetes</taxon>
        <taxon>Saccharomycetales</taxon>
        <taxon>Saccharomycetaceae</taxon>
        <taxon>Kluyveromyces</taxon>
    </lineage>
</organism>
<reference key="1">
    <citation type="journal article" date="2004" name="Nature">
        <title>Genome evolution in yeasts.</title>
        <authorList>
            <person name="Dujon B."/>
            <person name="Sherman D."/>
            <person name="Fischer G."/>
            <person name="Durrens P."/>
            <person name="Casaregola S."/>
            <person name="Lafontaine I."/>
            <person name="de Montigny J."/>
            <person name="Marck C."/>
            <person name="Neuveglise C."/>
            <person name="Talla E."/>
            <person name="Goffard N."/>
            <person name="Frangeul L."/>
            <person name="Aigle M."/>
            <person name="Anthouard V."/>
            <person name="Babour A."/>
            <person name="Barbe V."/>
            <person name="Barnay S."/>
            <person name="Blanchin S."/>
            <person name="Beckerich J.-M."/>
            <person name="Beyne E."/>
            <person name="Bleykasten C."/>
            <person name="Boisrame A."/>
            <person name="Boyer J."/>
            <person name="Cattolico L."/>
            <person name="Confanioleri F."/>
            <person name="de Daruvar A."/>
            <person name="Despons L."/>
            <person name="Fabre E."/>
            <person name="Fairhead C."/>
            <person name="Ferry-Dumazet H."/>
            <person name="Groppi A."/>
            <person name="Hantraye F."/>
            <person name="Hennequin C."/>
            <person name="Jauniaux N."/>
            <person name="Joyet P."/>
            <person name="Kachouri R."/>
            <person name="Kerrest A."/>
            <person name="Koszul R."/>
            <person name="Lemaire M."/>
            <person name="Lesur I."/>
            <person name="Ma L."/>
            <person name="Muller H."/>
            <person name="Nicaud J.-M."/>
            <person name="Nikolski M."/>
            <person name="Oztas S."/>
            <person name="Ozier-Kalogeropoulos O."/>
            <person name="Pellenz S."/>
            <person name="Potier S."/>
            <person name="Richard G.-F."/>
            <person name="Straub M.-L."/>
            <person name="Suleau A."/>
            <person name="Swennen D."/>
            <person name="Tekaia F."/>
            <person name="Wesolowski-Louvel M."/>
            <person name="Westhof E."/>
            <person name="Wirth B."/>
            <person name="Zeniou-Meyer M."/>
            <person name="Zivanovic Y."/>
            <person name="Bolotin-Fukuhara M."/>
            <person name="Thierry A."/>
            <person name="Bouchier C."/>
            <person name="Caudron B."/>
            <person name="Scarpelli C."/>
            <person name="Gaillardin C."/>
            <person name="Weissenbach J."/>
            <person name="Wincker P."/>
            <person name="Souciet J.-L."/>
        </authorList>
    </citation>
    <scope>NUCLEOTIDE SEQUENCE [LARGE SCALE GENOMIC DNA]</scope>
    <source>
        <strain>ATCC 8585 / CBS 2359 / DSM 70799 / NBRC 1267 / NRRL Y-1140 / WM37</strain>
    </source>
</reference>
<feature type="chain" id="PRO_0000194854" description="COP9 signalosome complex subunit 5">
    <location>
        <begin position="1"/>
        <end position="373"/>
    </location>
</feature>
<feature type="domain" description="MPN" evidence="2">
    <location>
        <begin position="66"/>
        <end position="201"/>
    </location>
</feature>
<feature type="region of interest" description="Disordered" evidence="3">
    <location>
        <begin position="289"/>
        <end position="325"/>
    </location>
</feature>
<feature type="short sequence motif" description="JAMM motif" evidence="2">
    <location>
        <begin position="147"/>
        <end position="160"/>
    </location>
</feature>
<feature type="compositionally biased region" description="Low complexity" evidence="3">
    <location>
        <begin position="295"/>
        <end position="306"/>
    </location>
</feature>
<feature type="binding site" evidence="2">
    <location>
        <position position="147"/>
    </location>
    <ligand>
        <name>Zn(2+)</name>
        <dbReference type="ChEBI" id="CHEBI:29105"/>
        <note>catalytic</note>
    </ligand>
</feature>
<feature type="binding site" evidence="2">
    <location>
        <position position="149"/>
    </location>
    <ligand>
        <name>Zn(2+)</name>
        <dbReference type="ChEBI" id="CHEBI:29105"/>
        <note>catalytic</note>
    </ligand>
</feature>
<feature type="binding site" evidence="2">
    <location>
        <position position="160"/>
    </location>
    <ligand>
        <name>Zn(2+)</name>
        <dbReference type="ChEBI" id="CHEBI:29105"/>
        <note>catalytic</note>
    </ligand>
</feature>
<name>CSN5_KLULA</name>
<gene>
    <name type="primary">RRI1</name>
    <name type="synonym">CSN5</name>
    <name type="ordered locus">KLLA0D08503g</name>
</gene>
<accession>Q6CRJ8</accession>
<dbReference type="EC" id="3.4.-.-"/>
<dbReference type="EMBL" id="CR382124">
    <property type="protein sequence ID" value="CAH00537.1"/>
    <property type="molecule type" value="Genomic_DNA"/>
</dbReference>
<dbReference type="RefSeq" id="XP_453441.1">
    <property type="nucleotide sequence ID" value="XM_453441.1"/>
</dbReference>
<dbReference type="SMR" id="Q6CRJ8"/>
<dbReference type="FunCoup" id="Q6CRJ8">
    <property type="interactions" value="66"/>
</dbReference>
<dbReference type="STRING" id="284590.Q6CRJ8"/>
<dbReference type="MEROPS" id="M67.A01"/>
<dbReference type="PaxDb" id="284590-Q6CRJ8"/>
<dbReference type="KEGG" id="kla:KLLA0_D08503g"/>
<dbReference type="eggNOG" id="KOG1554">
    <property type="taxonomic scope" value="Eukaryota"/>
</dbReference>
<dbReference type="HOGENOM" id="CLU_031199_1_0_1"/>
<dbReference type="InParanoid" id="Q6CRJ8"/>
<dbReference type="Proteomes" id="UP000000598">
    <property type="component" value="Chromosome D"/>
</dbReference>
<dbReference type="GO" id="GO:0008180">
    <property type="term" value="C:COP9 signalosome"/>
    <property type="evidence" value="ECO:0007669"/>
    <property type="project" value="UniProtKB-KW"/>
</dbReference>
<dbReference type="GO" id="GO:0005737">
    <property type="term" value="C:cytoplasm"/>
    <property type="evidence" value="ECO:0007669"/>
    <property type="project" value="UniProtKB-SubCell"/>
</dbReference>
<dbReference type="GO" id="GO:0046872">
    <property type="term" value="F:metal ion binding"/>
    <property type="evidence" value="ECO:0007669"/>
    <property type="project" value="UniProtKB-KW"/>
</dbReference>
<dbReference type="GO" id="GO:0008237">
    <property type="term" value="F:metallopeptidase activity"/>
    <property type="evidence" value="ECO:0007669"/>
    <property type="project" value="UniProtKB-KW"/>
</dbReference>
<dbReference type="GO" id="GO:0006508">
    <property type="term" value="P:proteolysis"/>
    <property type="evidence" value="ECO:0007669"/>
    <property type="project" value="UniProtKB-KW"/>
</dbReference>
<dbReference type="CDD" id="cd08069">
    <property type="entry name" value="MPN_RPN11_CSN5"/>
    <property type="match status" value="1"/>
</dbReference>
<dbReference type="FunFam" id="3.40.140.10:FF:000203">
    <property type="entry name" value="COP9 signalosome complex subunit 5"/>
    <property type="match status" value="1"/>
</dbReference>
<dbReference type="Gene3D" id="3.40.140.10">
    <property type="entry name" value="Cytidine Deaminase, domain 2"/>
    <property type="match status" value="1"/>
</dbReference>
<dbReference type="InterPro" id="IPR000555">
    <property type="entry name" value="JAMM/MPN+_dom"/>
</dbReference>
<dbReference type="InterPro" id="IPR050242">
    <property type="entry name" value="JAMM_MPN+_peptidase_M67A"/>
</dbReference>
<dbReference type="InterPro" id="IPR037518">
    <property type="entry name" value="MPN"/>
</dbReference>
<dbReference type="PANTHER" id="PTHR10410">
    <property type="entry name" value="EUKARYOTIC TRANSLATION INITIATION FACTOR 3 -RELATED"/>
    <property type="match status" value="1"/>
</dbReference>
<dbReference type="Pfam" id="PF01398">
    <property type="entry name" value="JAB"/>
    <property type="match status" value="1"/>
</dbReference>
<dbReference type="SMART" id="SM00232">
    <property type="entry name" value="JAB_MPN"/>
    <property type="match status" value="1"/>
</dbReference>
<dbReference type="SUPFAM" id="SSF102712">
    <property type="entry name" value="JAB1/MPN domain"/>
    <property type="match status" value="1"/>
</dbReference>
<dbReference type="PROSITE" id="PS50249">
    <property type="entry name" value="MPN"/>
    <property type="match status" value="1"/>
</dbReference>
<evidence type="ECO:0000250" key="1"/>
<evidence type="ECO:0000255" key="2">
    <source>
        <dbReference type="PROSITE-ProRule" id="PRU01182"/>
    </source>
</evidence>
<evidence type="ECO:0000256" key="3">
    <source>
        <dbReference type="SAM" id="MobiDB-lite"/>
    </source>
</evidence>
<evidence type="ECO:0000305" key="4"/>
<comment type="function">
    <text evidence="1">Catalytic Component of the COP9 signalosome (CSN) complex that acts as an regulator of the ubiquitin (Ubl) conjugation pathway by mediating the deneddylation of the cullin subunit of SCF-type E3 ubiquitin-protein ligase complexes. The CNS complex is involved in the regulation of the mating pheromone response.</text>
</comment>
<comment type="subunit">
    <text evidence="1">Component of the COP9 signalosome (CSN) complex.</text>
</comment>
<comment type="subcellular location">
    <subcellularLocation>
        <location evidence="1">Cytoplasm</location>
    </subcellularLocation>
    <subcellularLocation>
        <location evidence="1">Nucleus</location>
    </subcellularLocation>
</comment>
<comment type="domain">
    <text evidence="1">The JAMM motif is essential for the protease activity of the CSN complex resulting in deneddylation of cullins. It constitutes the catalytic center of the complex (By similarity).</text>
</comment>
<comment type="similarity">
    <text evidence="4">Belongs to the peptidase M67A family. CSN5 subfamily.</text>
</comment>
<sequence length="373" mass="42457">MSSIKFHEKSLKEVTRWIQANEDINTETSLSSSSDSSTTIPVIDHLPARIPYATDLKRNPCHFQKCLISRLATTKMLSHAVDGGDIEVMGMLVGYTSNDMIVVKDCYSLPVQGTETRVNAHMESYEYMVQYLDAFVTKEDKIVGWYHSHPGYGCWLSNIDIQTQSLNQNYQDPYLAIVVDPKKSLSGNTLDIGAFRTLPSKDNNEHVDYYPLNIQLYQNSLDVNISKLKLKFKVDPAIQNNPNEPELMKELHECVENWFHAKKVMKSTVGFNAIGSTVVNETEIGNEDFTHERSNSISSTSSLTTRHTTDVEMDDQESAQSSLDIPANVIPGMQFQEAEIKHEYELKKKKLLLLKVKQYQKLRTYRQLFNASE</sequence>
<proteinExistence type="inferred from homology"/>